<feature type="chain" id="PRO_0000060450" description="tRNA (guanine-N(1)-)-methyltransferase">
    <location>
        <begin position="1"/>
        <end position="255"/>
    </location>
</feature>
<feature type="binding site" evidence="1">
    <location>
        <position position="113"/>
    </location>
    <ligand>
        <name>S-adenosyl-L-methionine</name>
        <dbReference type="ChEBI" id="CHEBI:59789"/>
    </ligand>
</feature>
<feature type="binding site" evidence="1">
    <location>
        <begin position="133"/>
        <end position="138"/>
    </location>
    <ligand>
        <name>S-adenosyl-L-methionine</name>
        <dbReference type="ChEBI" id="CHEBI:59789"/>
    </ligand>
</feature>
<accession>P36245</accession>
<evidence type="ECO:0000250" key="1"/>
<evidence type="ECO:0000305" key="2"/>
<protein>
    <recommendedName>
        <fullName>tRNA (guanine-N(1)-)-methyltransferase</fullName>
        <ecNumber>2.1.1.228</ecNumber>
    </recommendedName>
    <alternativeName>
        <fullName>M1G-methyltransferase</fullName>
    </alternativeName>
    <alternativeName>
        <fullName>tRNA [GM37] methyltransferase</fullName>
    </alternativeName>
</protein>
<comment type="function">
    <text evidence="1">Specifically methylates guanosine-37 in various tRNAs.</text>
</comment>
<comment type="catalytic activity">
    <reaction>
        <text>guanosine(37) in tRNA + S-adenosyl-L-methionine = N(1)-methylguanosine(37) in tRNA + S-adenosyl-L-homocysteine + H(+)</text>
        <dbReference type="Rhea" id="RHEA:36899"/>
        <dbReference type="Rhea" id="RHEA-COMP:10145"/>
        <dbReference type="Rhea" id="RHEA-COMP:10147"/>
        <dbReference type="ChEBI" id="CHEBI:15378"/>
        <dbReference type="ChEBI" id="CHEBI:57856"/>
        <dbReference type="ChEBI" id="CHEBI:59789"/>
        <dbReference type="ChEBI" id="CHEBI:73542"/>
        <dbReference type="ChEBI" id="CHEBI:74269"/>
        <dbReference type="EC" id="2.1.1.228"/>
    </reaction>
</comment>
<comment type="subunit">
    <text evidence="1">Homodimer.</text>
</comment>
<comment type="subcellular location">
    <subcellularLocation>
        <location evidence="2">Cytoplasm</location>
    </subcellularLocation>
</comment>
<comment type="similarity">
    <text evidence="2">Belongs to the RNA methyltransferase TrmD family.</text>
</comment>
<reference key="1">
    <citation type="submission" date="1993-09" db="EMBL/GenBank/DDBJ databases">
        <authorList>
            <person name="Persson B.C."/>
        </authorList>
    </citation>
    <scope>NUCLEOTIDE SEQUENCE [GENOMIC DNA]</scope>
    <source>
        <strain>LT2</strain>
    </source>
</reference>
<reference key="2">
    <citation type="journal article" date="2001" name="Nature">
        <title>Complete genome sequence of Salmonella enterica serovar Typhimurium LT2.</title>
        <authorList>
            <person name="McClelland M."/>
            <person name="Sanderson K.E."/>
            <person name="Spieth J."/>
            <person name="Clifton S.W."/>
            <person name="Latreille P."/>
            <person name="Courtney L."/>
            <person name="Porwollik S."/>
            <person name="Ali J."/>
            <person name="Dante M."/>
            <person name="Du F."/>
            <person name="Hou S."/>
            <person name="Layman D."/>
            <person name="Leonard S."/>
            <person name="Nguyen C."/>
            <person name="Scott K."/>
            <person name="Holmes A."/>
            <person name="Grewal N."/>
            <person name="Mulvaney E."/>
            <person name="Ryan E."/>
            <person name="Sun H."/>
            <person name="Florea L."/>
            <person name="Miller W."/>
            <person name="Stoneking T."/>
            <person name="Nhan M."/>
            <person name="Waterston R."/>
            <person name="Wilson R.K."/>
        </authorList>
    </citation>
    <scope>NUCLEOTIDE SEQUENCE [LARGE SCALE GENOMIC DNA]</scope>
    <source>
        <strain>LT2 / SGSC1412 / ATCC 700720</strain>
    </source>
</reference>
<organism>
    <name type="scientific">Salmonella typhimurium (strain LT2 / SGSC1412 / ATCC 700720)</name>
    <dbReference type="NCBI Taxonomy" id="99287"/>
    <lineage>
        <taxon>Bacteria</taxon>
        <taxon>Pseudomonadati</taxon>
        <taxon>Pseudomonadota</taxon>
        <taxon>Gammaproteobacteria</taxon>
        <taxon>Enterobacterales</taxon>
        <taxon>Enterobacteriaceae</taxon>
        <taxon>Salmonella</taxon>
    </lineage>
</organism>
<proteinExistence type="inferred from homology"/>
<sequence>MFIGIVSLFPEMFRAITDYGVTGRAVKKGLLNIQSWSPRDFAHDRHRTVDDRPYGGGPGMLMMVQPLRDAIHAAKAAAGEGAKVIYLSPQGRKLDQAGVSELATNQKLILVCGRYEGVDERVIQTEIDEEWSIGDYVLSGGELPAMTLIDSVARFIPGVLGHEASAIEDSFADGLLDCPHYTRPEVLEGMEVPPVLLSGNHAEIRRWRLKQSLGRTWLRRPELLENLALTEEQARLLAEFKTEHAQQQHKHDGMA</sequence>
<keyword id="KW-0963">Cytoplasm</keyword>
<keyword id="KW-0489">Methyltransferase</keyword>
<keyword id="KW-1185">Reference proteome</keyword>
<keyword id="KW-0949">S-adenosyl-L-methionine</keyword>
<keyword id="KW-0808">Transferase</keyword>
<keyword id="KW-0819">tRNA processing</keyword>
<gene>
    <name type="primary">trmD</name>
    <name type="ordered locus">STM2674</name>
</gene>
<name>TRMD_SALTY</name>
<dbReference type="EC" id="2.1.1.228"/>
<dbReference type="EMBL" id="X74933">
    <property type="protein sequence ID" value="CAA52887.1"/>
    <property type="molecule type" value="Genomic_DNA"/>
</dbReference>
<dbReference type="EMBL" id="AE006468">
    <property type="protein sequence ID" value="AAL21563.1"/>
    <property type="molecule type" value="Genomic_DNA"/>
</dbReference>
<dbReference type="PIR" id="S37175">
    <property type="entry name" value="S37175"/>
</dbReference>
<dbReference type="RefSeq" id="NP_461604.1">
    <property type="nucleotide sequence ID" value="NC_003197.2"/>
</dbReference>
<dbReference type="RefSeq" id="WP_000469804.1">
    <property type="nucleotide sequence ID" value="NC_003197.2"/>
</dbReference>
<dbReference type="SMR" id="P36245"/>
<dbReference type="STRING" id="99287.STM2674"/>
<dbReference type="PaxDb" id="99287-STM2674"/>
<dbReference type="GeneID" id="1254197"/>
<dbReference type="KEGG" id="stm:STM2674"/>
<dbReference type="PATRIC" id="fig|99287.12.peg.2818"/>
<dbReference type="HOGENOM" id="CLU_047363_0_1_6"/>
<dbReference type="OMA" id="ILCGHYK"/>
<dbReference type="PhylomeDB" id="P36245"/>
<dbReference type="BioCyc" id="SENT99287:STM2674-MONOMER"/>
<dbReference type="BRENDA" id="2.1.1.228">
    <property type="organism ID" value="5542"/>
</dbReference>
<dbReference type="Proteomes" id="UP000001014">
    <property type="component" value="Chromosome"/>
</dbReference>
<dbReference type="GO" id="GO:0005829">
    <property type="term" value="C:cytosol"/>
    <property type="evidence" value="ECO:0000318"/>
    <property type="project" value="GO_Central"/>
</dbReference>
<dbReference type="GO" id="GO:0052906">
    <property type="term" value="F:tRNA (guanine(37)-N1)-methyltransferase activity"/>
    <property type="evidence" value="ECO:0000318"/>
    <property type="project" value="GO_Central"/>
</dbReference>
<dbReference type="GO" id="GO:0002939">
    <property type="term" value="P:tRNA N1-guanine methylation"/>
    <property type="evidence" value="ECO:0000318"/>
    <property type="project" value="GO_Central"/>
</dbReference>
<dbReference type="CDD" id="cd18080">
    <property type="entry name" value="TrmD-like"/>
    <property type="match status" value="1"/>
</dbReference>
<dbReference type="FunFam" id="1.10.1270.20:FF:000001">
    <property type="entry name" value="tRNA (guanine-N(1)-)-methyltransferase"/>
    <property type="match status" value="1"/>
</dbReference>
<dbReference type="FunFam" id="3.40.1280.10:FF:000001">
    <property type="entry name" value="tRNA (guanine-N(1)-)-methyltransferase"/>
    <property type="match status" value="1"/>
</dbReference>
<dbReference type="Gene3D" id="3.40.1280.10">
    <property type="match status" value="1"/>
</dbReference>
<dbReference type="Gene3D" id="1.10.1270.20">
    <property type="entry name" value="tRNA(m1g37)methyltransferase, domain 2"/>
    <property type="match status" value="1"/>
</dbReference>
<dbReference type="HAMAP" id="MF_00605">
    <property type="entry name" value="TrmD"/>
    <property type="match status" value="1"/>
</dbReference>
<dbReference type="InterPro" id="IPR029028">
    <property type="entry name" value="Alpha/beta_knot_MTases"/>
</dbReference>
<dbReference type="InterPro" id="IPR023148">
    <property type="entry name" value="tRNA_m1G_MeTrfase_C_sf"/>
</dbReference>
<dbReference type="InterPro" id="IPR002649">
    <property type="entry name" value="tRNA_m1G_MeTrfase_TrmD"/>
</dbReference>
<dbReference type="InterPro" id="IPR029026">
    <property type="entry name" value="tRNA_m1G_MTases_N"/>
</dbReference>
<dbReference type="InterPro" id="IPR016009">
    <property type="entry name" value="tRNA_MeTrfase_TRMD/TRM10"/>
</dbReference>
<dbReference type="NCBIfam" id="NF000648">
    <property type="entry name" value="PRK00026.1"/>
    <property type="match status" value="1"/>
</dbReference>
<dbReference type="NCBIfam" id="TIGR00088">
    <property type="entry name" value="trmD"/>
    <property type="match status" value="1"/>
</dbReference>
<dbReference type="PANTHER" id="PTHR46417">
    <property type="entry name" value="TRNA (GUANINE-N(1)-)-METHYLTRANSFERASE"/>
    <property type="match status" value="1"/>
</dbReference>
<dbReference type="PANTHER" id="PTHR46417:SF1">
    <property type="entry name" value="TRNA (GUANINE-N(1)-)-METHYLTRANSFERASE"/>
    <property type="match status" value="1"/>
</dbReference>
<dbReference type="Pfam" id="PF01746">
    <property type="entry name" value="tRNA_m1G_MT"/>
    <property type="match status" value="1"/>
</dbReference>
<dbReference type="PIRSF" id="PIRSF000386">
    <property type="entry name" value="tRNA_mtase"/>
    <property type="match status" value="1"/>
</dbReference>
<dbReference type="SUPFAM" id="SSF75217">
    <property type="entry name" value="alpha/beta knot"/>
    <property type="match status" value="1"/>
</dbReference>